<gene>
    <name type="primary">U6</name>
</gene>
<dbReference type="EMBL" id="X83413">
    <property type="status" value="NOT_ANNOTATED_CDS"/>
    <property type="molecule type" value="Genomic_DNA"/>
</dbReference>
<dbReference type="Proteomes" id="UP000009295">
    <property type="component" value="Segment"/>
</dbReference>
<sequence length="82" mass="8877">MFHTKQSEEGCSPLMPNLAAAVPCRPFVNLARETGTTNLLVAGSRPTNTGVRNFVINLTVGESSSSRRTANRILLRSFTSLL</sequence>
<organism>
    <name type="scientific">Human herpesvirus 6A (strain Uganda-1102)</name>
    <name type="common">HHV-6 variant A</name>
    <name type="synonym">Human B lymphotropic virus</name>
    <dbReference type="NCBI Taxonomy" id="10370"/>
    <lineage>
        <taxon>Viruses</taxon>
        <taxon>Duplodnaviria</taxon>
        <taxon>Heunggongvirae</taxon>
        <taxon>Peploviricota</taxon>
        <taxon>Herviviricetes</taxon>
        <taxon>Herpesvirales</taxon>
        <taxon>Orthoherpesviridae</taxon>
        <taxon>Betaherpesvirinae</taxon>
        <taxon>Roseolovirus</taxon>
        <taxon>Roseolovirus humanbeta6a</taxon>
        <taxon>Human betaherpesvirus 6A</taxon>
    </lineage>
</organism>
<feature type="chain" id="PRO_0000342582" description="Uncharacterized protein U6">
    <location>
        <begin position="1"/>
        <end position="82"/>
    </location>
</feature>
<proteinExistence type="predicted"/>
<name>U6_HHV6U</name>
<organismHost>
    <name type="scientific">Homo sapiens</name>
    <name type="common">Human</name>
    <dbReference type="NCBI Taxonomy" id="9606"/>
</organismHost>
<accession>Q69546</accession>
<protein>
    <recommendedName>
        <fullName>Uncharacterized protein U6</fullName>
    </recommendedName>
</protein>
<reference key="1">
    <citation type="journal article" date="1995" name="Virology">
        <title>The DNA sequence of human herpesvirus-6: structure, coding content, and genome evolution.</title>
        <authorList>
            <person name="Gompels U.A."/>
            <person name="Nicholas J."/>
            <person name="Lawrence G.L."/>
            <person name="Jones M."/>
            <person name="Thomson B.J."/>
            <person name="Martin M.E.D."/>
            <person name="Efstathiou S."/>
            <person name="Craxton M.A."/>
            <person name="Macaulay H.A."/>
        </authorList>
    </citation>
    <scope>NUCLEOTIDE SEQUENCE [LARGE SCALE GENOMIC DNA]</scope>
</reference>
<keyword id="KW-1185">Reference proteome</keyword>